<evidence type="ECO:0000250" key="1"/>
<evidence type="ECO:0000255" key="2">
    <source>
        <dbReference type="PROSITE-ProRule" id="PRU10001"/>
    </source>
</evidence>
<evidence type="ECO:0000305" key="3"/>
<accession>Q9X248</accession>
<sequence length="246" mass="26402">MRLEGKVCLITGAASGIGKATTLLFAQEGATVIAGDISKENLDSLVKEAEGLPGKVDPYVLNVTDRDQIKEVVEKVVQKYGRIDVLVNNAGITRDALLVRMKEEDWDAVINVNLKGVFNVTQMVVPYMIKQRNGSIVNVSSVVGIYGNPGQTNYAASKAGVIGMTKTWAKELAGRNIRVNAVAPGFIETPMTEKLPEKARETALSRIPLGRFGKPEEVAQVILFLASDESSYVTGQVIGIDGGLVI</sequence>
<feature type="chain" id="PRO_0000054693" description="3-oxoacyl-[acyl-carrier-protein] reductase FabG">
    <location>
        <begin position="1"/>
        <end position="246"/>
    </location>
</feature>
<feature type="active site" description="Proton acceptor" evidence="2">
    <location>
        <position position="154"/>
    </location>
</feature>
<feature type="binding site" evidence="1">
    <location>
        <begin position="62"/>
        <end position="63"/>
    </location>
    <ligand>
        <name>NADP(+)</name>
        <dbReference type="ChEBI" id="CHEBI:58349"/>
    </ligand>
</feature>
<feature type="binding site" evidence="1">
    <location>
        <position position="89"/>
    </location>
    <ligand>
        <name>NADP(+)</name>
        <dbReference type="ChEBI" id="CHEBI:58349"/>
    </ligand>
</feature>
<feature type="binding site" evidence="1">
    <location>
        <position position="141"/>
    </location>
    <ligand>
        <name>substrate</name>
    </ligand>
</feature>
<feature type="binding site" evidence="1">
    <location>
        <begin position="154"/>
        <end position="158"/>
    </location>
    <ligand>
        <name>NADP(+)</name>
        <dbReference type="ChEBI" id="CHEBI:58349"/>
    </ligand>
</feature>
<feature type="binding site" evidence="1">
    <location>
        <position position="187"/>
    </location>
    <ligand>
        <name>NADP(+)</name>
        <dbReference type="ChEBI" id="CHEBI:58349"/>
    </ligand>
</feature>
<protein>
    <recommendedName>
        <fullName>3-oxoacyl-[acyl-carrier-protein] reductase FabG</fullName>
        <ecNumber>1.1.1.100</ecNumber>
    </recommendedName>
    <alternativeName>
        <fullName>3-ketoacyl-acyl carrier protein reductase</fullName>
    </alternativeName>
    <alternativeName>
        <fullName>Beta-Ketoacyl-acyl carrier protein reductase</fullName>
    </alternativeName>
    <alternativeName>
        <fullName>Beta-ketoacyl-ACP reductase</fullName>
    </alternativeName>
</protein>
<keyword id="KW-0275">Fatty acid biosynthesis</keyword>
<keyword id="KW-0276">Fatty acid metabolism</keyword>
<keyword id="KW-0444">Lipid biosynthesis</keyword>
<keyword id="KW-0443">Lipid metabolism</keyword>
<keyword id="KW-0521">NADP</keyword>
<keyword id="KW-0560">Oxidoreductase</keyword>
<keyword id="KW-1185">Reference proteome</keyword>
<organism>
    <name type="scientific">Thermotoga maritima (strain ATCC 43589 / DSM 3109 / JCM 10099 / NBRC 100826 / MSB8)</name>
    <dbReference type="NCBI Taxonomy" id="243274"/>
    <lineage>
        <taxon>Bacteria</taxon>
        <taxon>Thermotogati</taxon>
        <taxon>Thermotogota</taxon>
        <taxon>Thermotogae</taxon>
        <taxon>Thermotogales</taxon>
        <taxon>Thermotogaceae</taxon>
        <taxon>Thermotoga</taxon>
    </lineage>
</organism>
<gene>
    <name type="primary">fabG</name>
    <name type="ordered locus">TM_1724</name>
</gene>
<comment type="function">
    <text evidence="1">Catalyzes the NADPH-dependent reduction of beta-ketoacyl-ACP substrates to beta-hydroxyacyl-ACP products, the first reductive step in the elongation cycle of fatty acid biosynthesis.</text>
</comment>
<comment type="catalytic activity">
    <reaction>
        <text>a (3R)-hydroxyacyl-[ACP] + NADP(+) = a 3-oxoacyl-[ACP] + NADPH + H(+)</text>
        <dbReference type="Rhea" id="RHEA:17397"/>
        <dbReference type="Rhea" id="RHEA-COMP:9916"/>
        <dbReference type="Rhea" id="RHEA-COMP:9945"/>
        <dbReference type="ChEBI" id="CHEBI:15378"/>
        <dbReference type="ChEBI" id="CHEBI:57783"/>
        <dbReference type="ChEBI" id="CHEBI:58349"/>
        <dbReference type="ChEBI" id="CHEBI:78776"/>
        <dbReference type="ChEBI" id="CHEBI:78827"/>
        <dbReference type="EC" id="1.1.1.100"/>
    </reaction>
</comment>
<comment type="pathway">
    <text>Lipid metabolism; fatty acid biosynthesis.</text>
</comment>
<comment type="subunit">
    <text evidence="1">Homotetramer.</text>
</comment>
<comment type="similarity">
    <text evidence="3">Belongs to the short-chain dehydrogenases/reductases (SDR) family.</text>
</comment>
<dbReference type="EC" id="1.1.1.100"/>
<dbReference type="EMBL" id="AE000512">
    <property type="protein sequence ID" value="AAD36790.1"/>
    <property type="molecule type" value="Genomic_DNA"/>
</dbReference>
<dbReference type="PIR" id="H72219">
    <property type="entry name" value="H72219"/>
</dbReference>
<dbReference type="RefSeq" id="NP_229523.1">
    <property type="nucleotide sequence ID" value="NC_000853.1"/>
</dbReference>
<dbReference type="RefSeq" id="WP_004082240.1">
    <property type="nucleotide sequence ID" value="NC_000853.1"/>
</dbReference>
<dbReference type="SMR" id="Q9X248"/>
<dbReference type="FunCoup" id="Q9X248">
    <property type="interactions" value="383"/>
</dbReference>
<dbReference type="STRING" id="243274.TM_1724"/>
<dbReference type="PaxDb" id="243274-THEMA_05620"/>
<dbReference type="EnsemblBacteria" id="AAD36790">
    <property type="protein sequence ID" value="AAD36790"/>
    <property type="gene ID" value="TM_1724"/>
</dbReference>
<dbReference type="KEGG" id="tma:TM1724"/>
<dbReference type="KEGG" id="tmi:THEMA_05620"/>
<dbReference type="KEGG" id="tmm:Tmari_1732"/>
<dbReference type="KEGG" id="tmw:THMA_1766"/>
<dbReference type="eggNOG" id="COG1028">
    <property type="taxonomic scope" value="Bacteria"/>
</dbReference>
<dbReference type="InParanoid" id="Q9X248"/>
<dbReference type="OrthoDB" id="9803333at2"/>
<dbReference type="UniPathway" id="UPA00094"/>
<dbReference type="Proteomes" id="UP000008183">
    <property type="component" value="Chromosome"/>
</dbReference>
<dbReference type="GO" id="GO:0004316">
    <property type="term" value="F:3-oxoacyl-[acyl-carrier-protein] reductase (NADPH) activity"/>
    <property type="evidence" value="ECO:0000250"/>
    <property type="project" value="UniProtKB"/>
</dbReference>
<dbReference type="GO" id="GO:0051287">
    <property type="term" value="F:NAD binding"/>
    <property type="evidence" value="ECO:0007669"/>
    <property type="project" value="InterPro"/>
</dbReference>
<dbReference type="GO" id="GO:0050661">
    <property type="term" value="F:NADP binding"/>
    <property type="evidence" value="ECO:0000250"/>
    <property type="project" value="UniProtKB"/>
</dbReference>
<dbReference type="GO" id="GO:0030497">
    <property type="term" value="P:fatty acid elongation"/>
    <property type="evidence" value="ECO:0000250"/>
    <property type="project" value="UniProtKB"/>
</dbReference>
<dbReference type="CDD" id="cd05333">
    <property type="entry name" value="BKR_SDR_c"/>
    <property type="match status" value="1"/>
</dbReference>
<dbReference type="FunFam" id="3.40.50.720:FF:000115">
    <property type="entry name" value="3-oxoacyl-[acyl-carrier-protein] reductase FabG"/>
    <property type="match status" value="1"/>
</dbReference>
<dbReference type="Gene3D" id="3.40.50.720">
    <property type="entry name" value="NAD(P)-binding Rossmann-like Domain"/>
    <property type="match status" value="1"/>
</dbReference>
<dbReference type="InterPro" id="IPR011284">
    <property type="entry name" value="3oxo_ACP_reduc"/>
</dbReference>
<dbReference type="InterPro" id="IPR036291">
    <property type="entry name" value="NAD(P)-bd_dom_sf"/>
</dbReference>
<dbReference type="InterPro" id="IPR020904">
    <property type="entry name" value="Sc_DH/Rdtase_CS"/>
</dbReference>
<dbReference type="InterPro" id="IPR002347">
    <property type="entry name" value="SDR_fam"/>
</dbReference>
<dbReference type="NCBIfam" id="TIGR01830">
    <property type="entry name" value="3oxo_ACP_reduc"/>
    <property type="match status" value="1"/>
</dbReference>
<dbReference type="NCBIfam" id="NF004198">
    <property type="entry name" value="PRK05653.1-3"/>
    <property type="match status" value="1"/>
</dbReference>
<dbReference type="NCBIfam" id="NF005559">
    <property type="entry name" value="PRK07231.1"/>
    <property type="match status" value="1"/>
</dbReference>
<dbReference type="NCBIfam" id="NF009466">
    <property type="entry name" value="PRK12826.1-2"/>
    <property type="match status" value="1"/>
</dbReference>
<dbReference type="PANTHER" id="PTHR42760:SF133">
    <property type="entry name" value="3-OXOACYL-[ACYL-CARRIER-PROTEIN] REDUCTASE"/>
    <property type="match status" value="1"/>
</dbReference>
<dbReference type="PANTHER" id="PTHR42760">
    <property type="entry name" value="SHORT-CHAIN DEHYDROGENASES/REDUCTASES FAMILY MEMBER"/>
    <property type="match status" value="1"/>
</dbReference>
<dbReference type="Pfam" id="PF13561">
    <property type="entry name" value="adh_short_C2"/>
    <property type="match status" value="1"/>
</dbReference>
<dbReference type="PRINTS" id="PR00081">
    <property type="entry name" value="GDHRDH"/>
</dbReference>
<dbReference type="PRINTS" id="PR00080">
    <property type="entry name" value="SDRFAMILY"/>
</dbReference>
<dbReference type="SMART" id="SM00822">
    <property type="entry name" value="PKS_KR"/>
    <property type="match status" value="1"/>
</dbReference>
<dbReference type="SUPFAM" id="SSF51735">
    <property type="entry name" value="NAD(P)-binding Rossmann-fold domains"/>
    <property type="match status" value="1"/>
</dbReference>
<dbReference type="PROSITE" id="PS00061">
    <property type="entry name" value="ADH_SHORT"/>
    <property type="match status" value="1"/>
</dbReference>
<reference key="1">
    <citation type="journal article" date="1999" name="Nature">
        <title>Evidence for lateral gene transfer between Archaea and Bacteria from genome sequence of Thermotoga maritima.</title>
        <authorList>
            <person name="Nelson K.E."/>
            <person name="Clayton R.A."/>
            <person name="Gill S.R."/>
            <person name="Gwinn M.L."/>
            <person name="Dodson R.J."/>
            <person name="Haft D.H."/>
            <person name="Hickey E.K."/>
            <person name="Peterson J.D."/>
            <person name="Nelson W.C."/>
            <person name="Ketchum K.A."/>
            <person name="McDonald L.A."/>
            <person name="Utterback T.R."/>
            <person name="Malek J.A."/>
            <person name="Linher K.D."/>
            <person name="Garrett M.M."/>
            <person name="Stewart A.M."/>
            <person name="Cotton M.D."/>
            <person name="Pratt M.S."/>
            <person name="Phillips C.A."/>
            <person name="Richardson D.L."/>
            <person name="Heidelberg J.F."/>
            <person name="Sutton G.G."/>
            <person name="Fleischmann R.D."/>
            <person name="Eisen J.A."/>
            <person name="White O."/>
            <person name="Salzberg S.L."/>
            <person name="Smith H.O."/>
            <person name="Venter J.C."/>
            <person name="Fraser C.M."/>
        </authorList>
    </citation>
    <scope>NUCLEOTIDE SEQUENCE [LARGE SCALE GENOMIC DNA]</scope>
    <source>
        <strain>ATCC 43589 / DSM 3109 / JCM 10099 / NBRC 100826 / MSB8</strain>
    </source>
</reference>
<name>FABG_THEMA</name>
<proteinExistence type="inferred from homology"/>